<dbReference type="EC" id="2.1.1.72"/>
<dbReference type="EMBL" id="CP000708">
    <property type="protein sequence ID" value="ABQ61978.1"/>
    <property type="molecule type" value="Genomic_DNA"/>
</dbReference>
<dbReference type="SMR" id="A5VP58"/>
<dbReference type="REBASE" id="15978">
    <property type="entry name" value="M.BovORF495P"/>
</dbReference>
<dbReference type="KEGG" id="bov:BOV_0495"/>
<dbReference type="HOGENOM" id="CLU_024927_5_1_5"/>
<dbReference type="Proteomes" id="UP000006383">
    <property type="component" value="Chromosome I"/>
</dbReference>
<dbReference type="GO" id="GO:0005737">
    <property type="term" value="C:cytoplasm"/>
    <property type="evidence" value="ECO:0007669"/>
    <property type="project" value="TreeGrafter"/>
</dbReference>
<dbReference type="GO" id="GO:0003677">
    <property type="term" value="F:DNA binding"/>
    <property type="evidence" value="ECO:0007669"/>
    <property type="project" value="UniProtKB-KW"/>
</dbReference>
<dbReference type="GO" id="GO:0008170">
    <property type="term" value="F:N-methyltransferase activity"/>
    <property type="evidence" value="ECO:0007669"/>
    <property type="project" value="InterPro"/>
</dbReference>
<dbReference type="GO" id="GO:0009007">
    <property type="term" value="F:site-specific DNA-methyltransferase (adenine-specific) activity"/>
    <property type="evidence" value="ECO:0007669"/>
    <property type="project" value="UniProtKB-EC"/>
</dbReference>
<dbReference type="GO" id="GO:0006260">
    <property type="term" value="P:DNA replication"/>
    <property type="evidence" value="ECO:0007669"/>
    <property type="project" value="UniProtKB-KW"/>
</dbReference>
<dbReference type="GO" id="GO:0032259">
    <property type="term" value="P:methylation"/>
    <property type="evidence" value="ECO:0007669"/>
    <property type="project" value="UniProtKB-KW"/>
</dbReference>
<dbReference type="FunFam" id="3.40.50.150:FF:000276">
    <property type="entry name" value="Methyltransferase"/>
    <property type="match status" value="1"/>
</dbReference>
<dbReference type="Gene3D" id="3.40.50.150">
    <property type="entry name" value="Vaccinia Virus protein VP39"/>
    <property type="match status" value="1"/>
</dbReference>
<dbReference type="InterPro" id="IPR002941">
    <property type="entry name" value="DNA_methylase_N4/N6"/>
</dbReference>
<dbReference type="InterPro" id="IPR002052">
    <property type="entry name" value="DNA_methylase_N6_adenine_CS"/>
</dbReference>
<dbReference type="InterPro" id="IPR040843">
    <property type="entry name" value="RAMA"/>
</dbReference>
<dbReference type="InterPro" id="IPR001091">
    <property type="entry name" value="RM_Methyltransferase"/>
</dbReference>
<dbReference type="InterPro" id="IPR029063">
    <property type="entry name" value="SAM-dependent_MTases_sf"/>
</dbReference>
<dbReference type="PANTHER" id="PTHR13370">
    <property type="entry name" value="RNA METHYLASE-RELATED"/>
    <property type="match status" value="1"/>
</dbReference>
<dbReference type="PANTHER" id="PTHR13370:SF3">
    <property type="entry name" value="TRNA (GUANINE(10)-N2)-METHYLTRANSFERASE HOMOLOG"/>
    <property type="match status" value="1"/>
</dbReference>
<dbReference type="Pfam" id="PF01555">
    <property type="entry name" value="N6_N4_Mtase"/>
    <property type="match status" value="1"/>
</dbReference>
<dbReference type="Pfam" id="PF18755">
    <property type="entry name" value="RAMA"/>
    <property type="match status" value="1"/>
</dbReference>
<dbReference type="PRINTS" id="PR00508">
    <property type="entry name" value="S21N4MTFRASE"/>
</dbReference>
<dbReference type="SUPFAM" id="SSF53335">
    <property type="entry name" value="S-adenosyl-L-methionine-dependent methyltransferases"/>
    <property type="match status" value="1"/>
</dbReference>
<dbReference type="PROSITE" id="PS00092">
    <property type="entry name" value="N6_MTASE"/>
    <property type="match status" value="1"/>
</dbReference>
<proteinExistence type="inferred from homology"/>
<evidence type="ECO:0000250" key="1">
    <source>
        <dbReference type="UniProtKB" id="O30569"/>
    </source>
</evidence>
<evidence type="ECO:0000250" key="2">
    <source>
        <dbReference type="UniProtKB" id="Q2YMK2"/>
    </source>
</evidence>
<evidence type="ECO:0000255" key="3"/>
<evidence type="ECO:0000303" key="4">
    <source>
    </source>
</evidence>
<evidence type="ECO:0000305" key="5"/>
<gene>
    <name type="primary">ccrM</name>
    <name type="synonym">babI</name>
    <name type="ordered locus">BOV_0495</name>
</gene>
<protein>
    <recommendedName>
        <fullName evidence="2">DNA methyltransferase CcrM</fullName>
        <shortName>M.CcrM</shortName>
        <ecNumber>2.1.1.72</ecNumber>
    </recommendedName>
    <alternativeName>
        <fullName>Adenine-specific methyltransferase BabI</fullName>
    </alternativeName>
    <alternativeName>
        <fullName evidence="4">Probable type II methyltransferase M.BovORF495P</fullName>
        <shortName evidence="4">M.BovORF495P</shortName>
    </alternativeName>
</protein>
<reference key="1">
    <citation type="journal article" date="2009" name="PLoS ONE">
        <title>Genome degradation in Brucella ovis corresponds with narrowing of its host range and tissue tropism.</title>
        <authorList>
            <person name="Tsolis R.M."/>
            <person name="Seshadri R."/>
            <person name="Santos R.L."/>
            <person name="Sangari F.J."/>
            <person name="Lobo J.M."/>
            <person name="de Jong M.F."/>
            <person name="Ren Q."/>
            <person name="Myers G."/>
            <person name="Brinkac L.M."/>
            <person name="Nelson W.C."/>
            <person name="Deboy R.T."/>
            <person name="Angiuoli S."/>
            <person name="Khouri H."/>
            <person name="Dimitrov G."/>
            <person name="Robinson J.R."/>
            <person name="Mulligan S."/>
            <person name="Walker R.L."/>
            <person name="Elzer P.E."/>
            <person name="Hassan K.A."/>
            <person name="Paulsen I.T."/>
        </authorList>
    </citation>
    <scope>NUCLEOTIDE SEQUENCE [LARGE SCALE GENOMIC DNA]</scope>
    <source>
        <strain>ATCC 25840 / 63/290 / NCTC 10512</strain>
    </source>
</reference>
<reference key="2">
    <citation type="journal article" date="2003" name="Nucleic Acids Res.">
        <title>A nomenclature for restriction enzymes, DNA methyltransferases, homing endonucleases and their genes.</title>
        <authorList>
            <person name="Roberts R.J."/>
            <person name="Belfort M."/>
            <person name="Bestor T."/>
            <person name="Bhagwat A.S."/>
            <person name="Bickle T.A."/>
            <person name="Bitinaite J."/>
            <person name="Blumenthal R.M."/>
            <person name="Degtyarev S.K."/>
            <person name="Dryden D.T."/>
            <person name="Dybvig K."/>
            <person name="Firman K."/>
            <person name="Gromova E.S."/>
            <person name="Gumport R.I."/>
            <person name="Halford S.E."/>
            <person name="Hattman S."/>
            <person name="Heitman J."/>
            <person name="Hornby D.P."/>
            <person name="Janulaitis A."/>
            <person name="Jeltsch A."/>
            <person name="Josephsen J."/>
            <person name="Kiss A."/>
            <person name="Klaenhammer T.R."/>
            <person name="Kobayashi I."/>
            <person name="Kong H."/>
            <person name="Krueger D.H."/>
            <person name="Lacks S."/>
            <person name="Marinus M.G."/>
            <person name="Miyahara M."/>
            <person name="Morgan R.D."/>
            <person name="Murray N.E."/>
            <person name="Nagaraja V."/>
            <person name="Piekarowicz A."/>
            <person name="Pingoud A."/>
            <person name="Raleigh E."/>
            <person name="Rao D.N."/>
            <person name="Reich N."/>
            <person name="Repin V.E."/>
            <person name="Selker E.U."/>
            <person name="Shaw P.C."/>
            <person name="Stein D.C."/>
            <person name="Stoddard B.L."/>
            <person name="Szybalski W."/>
            <person name="Trautner T.A."/>
            <person name="Van Etten J.L."/>
            <person name="Vitor J.M."/>
            <person name="Wilson G.G."/>
            <person name="Xu S.Y."/>
        </authorList>
    </citation>
    <scope>NOMENCLATURE</scope>
    <scope>SUBTYPE</scope>
</reference>
<organism>
    <name type="scientific">Brucella ovis (strain ATCC 25840 / 63/290 / NCTC 10512)</name>
    <dbReference type="NCBI Taxonomy" id="444178"/>
    <lineage>
        <taxon>Bacteria</taxon>
        <taxon>Pseudomonadati</taxon>
        <taxon>Pseudomonadota</taxon>
        <taxon>Alphaproteobacteria</taxon>
        <taxon>Hyphomicrobiales</taxon>
        <taxon>Brucellaceae</taxon>
        <taxon>Brucella/Ochrobactrum group</taxon>
        <taxon>Brucella</taxon>
    </lineage>
</organism>
<accession>A5VP58</accession>
<comment type="function">
    <text evidence="1 2 4">A beta subtype methylase that recognizes the double-stranded sequence 5'-GANTC-3' and methylates A-2 on both strands (By similarity) (PubMed:12654995). CcrM-mediated methylation has important cellular functions. Contributes to the accurate cell-cycle control of DNA replication and cellular morphology (By similarity).</text>
</comment>
<comment type="catalytic activity">
    <reaction>
        <text>a 2'-deoxyadenosine in DNA + S-adenosyl-L-methionine = an N(6)-methyl-2'-deoxyadenosine in DNA + S-adenosyl-L-homocysteine + H(+)</text>
        <dbReference type="Rhea" id="RHEA:15197"/>
        <dbReference type="Rhea" id="RHEA-COMP:12418"/>
        <dbReference type="Rhea" id="RHEA-COMP:12419"/>
        <dbReference type="ChEBI" id="CHEBI:15378"/>
        <dbReference type="ChEBI" id="CHEBI:57856"/>
        <dbReference type="ChEBI" id="CHEBI:59789"/>
        <dbReference type="ChEBI" id="CHEBI:90615"/>
        <dbReference type="ChEBI" id="CHEBI:90616"/>
        <dbReference type="EC" id="2.1.1.72"/>
    </reaction>
</comment>
<comment type="similarity">
    <text evidence="5">Belongs to the N(4)/N(6)-methyltransferase family.</text>
</comment>
<sequence>MRSQVIEYPMSLVRLAHELPIEAPRTAWLDSIIKGDCVSALERLPDHSVDVIFADPPYNLQLGGDLHRPDQSMVSAVDDHWDQFESFQAYDAFTRAWLLACRRVLKPNGTIWVIGSYHNIFRVGTQLQDLGFWLLNDIVWRKTNPMPNFRGRRFQNAHETLIWASRDQKGKGYTFNYEAMKAANDDVQMRSDWLFPICTGSERLKDENGDKVHPTQKPEALLARIMMASSKPGDVILDPFFGSGTTGAVAKRLGRHFVGIEREQPYIDAATARINAVEPLGKAELTVMTGKRAEPRVAFTSVMEAGLLRPGTVLCDERRRFAAIVRADGTLTANGEAGSIHRIGARVQGFDACNGWTFWHFEENGVLKPIDALRKIIREQMAAAGA</sequence>
<feature type="chain" id="PRO_0000363192" description="DNA methyltransferase CcrM">
    <location>
        <begin position="1"/>
        <end position="386"/>
    </location>
</feature>
<feature type="domain" description="RAMA" evidence="3">
    <location>
        <begin position="280"/>
        <end position="382"/>
    </location>
</feature>
<name>CCRM_BRUO2</name>
<keyword id="KW-0235">DNA replication</keyword>
<keyword id="KW-0238">DNA-binding</keyword>
<keyword id="KW-0489">Methyltransferase</keyword>
<keyword id="KW-0949">S-adenosyl-L-methionine</keyword>
<keyword id="KW-0808">Transferase</keyword>